<reference key="1">
    <citation type="journal article" date="2010" name="PLoS ONE">
        <title>The complete genome sequence of Cupriavidus metallidurans strain CH34, a master survivalist in harsh and anthropogenic environments.</title>
        <authorList>
            <person name="Janssen P.J."/>
            <person name="Van Houdt R."/>
            <person name="Moors H."/>
            <person name="Monsieurs P."/>
            <person name="Morin N."/>
            <person name="Michaux A."/>
            <person name="Benotmane M.A."/>
            <person name="Leys N."/>
            <person name="Vallaeys T."/>
            <person name="Lapidus A."/>
            <person name="Monchy S."/>
            <person name="Medigue C."/>
            <person name="Taghavi S."/>
            <person name="McCorkle S."/>
            <person name="Dunn J."/>
            <person name="van der Lelie D."/>
            <person name="Mergeay M."/>
        </authorList>
    </citation>
    <scope>NUCLEOTIDE SEQUENCE [LARGE SCALE GENOMIC DNA]</scope>
    <source>
        <strain>ATCC 43123 / DSM 2839 / NBRC 102507 / CH34</strain>
    </source>
</reference>
<protein>
    <recommendedName>
        <fullName evidence="1">ATP synthase subunit delta</fullName>
    </recommendedName>
    <alternativeName>
        <fullName evidence="1">ATP synthase F(1) sector subunit delta</fullName>
    </alternativeName>
    <alternativeName>
        <fullName evidence="1">F-type ATPase subunit delta</fullName>
        <shortName evidence="1">F-ATPase subunit delta</shortName>
    </alternativeName>
</protein>
<organism>
    <name type="scientific">Cupriavidus metallidurans (strain ATCC 43123 / DSM 2839 / NBRC 102507 / CH34)</name>
    <name type="common">Ralstonia metallidurans</name>
    <dbReference type="NCBI Taxonomy" id="266264"/>
    <lineage>
        <taxon>Bacteria</taxon>
        <taxon>Pseudomonadati</taxon>
        <taxon>Pseudomonadota</taxon>
        <taxon>Betaproteobacteria</taxon>
        <taxon>Burkholderiales</taxon>
        <taxon>Burkholderiaceae</taxon>
        <taxon>Cupriavidus</taxon>
    </lineage>
</organism>
<accession>Q1LHK7</accession>
<proteinExistence type="inferred from homology"/>
<keyword id="KW-0066">ATP synthesis</keyword>
<keyword id="KW-0997">Cell inner membrane</keyword>
<keyword id="KW-1003">Cell membrane</keyword>
<keyword id="KW-0139">CF(1)</keyword>
<keyword id="KW-0375">Hydrogen ion transport</keyword>
<keyword id="KW-0406">Ion transport</keyword>
<keyword id="KW-0472">Membrane</keyword>
<keyword id="KW-1185">Reference proteome</keyword>
<keyword id="KW-0813">Transport</keyword>
<sequence>MAETATIARPYAEALFRVASEAGAGNLGAWSELVSEMGQVAANPDMQALATDPNISGDKLEEVFLSVLKSPVNDEARRFVKLLVENSRLTALPEIAEQFHALKNAREGSSDVEITSAFPLDASQTNELVAALERKFGRKLYAKVAVDPSLIGGVSVKVGDEVLDTSVRSRLAAMQAALTA</sequence>
<dbReference type="EMBL" id="CP000352">
    <property type="protein sequence ID" value="ABF10369.1"/>
    <property type="molecule type" value="Genomic_DNA"/>
</dbReference>
<dbReference type="RefSeq" id="WP_008650160.1">
    <property type="nucleotide sequence ID" value="NC_007973.1"/>
</dbReference>
<dbReference type="SMR" id="Q1LHK7"/>
<dbReference type="STRING" id="266264.Rmet_3497"/>
<dbReference type="KEGG" id="rme:Rmet_3497"/>
<dbReference type="eggNOG" id="COG0712">
    <property type="taxonomic scope" value="Bacteria"/>
</dbReference>
<dbReference type="HOGENOM" id="CLU_085114_3_0_4"/>
<dbReference type="Proteomes" id="UP000002429">
    <property type="component" value="Chromosome"/>
</dbReference>
<dbReference type="GO" id="GO:0005886">
    <property type="term" value="C:plasma membrane"/>
    <property type="evidence" value="ECO:0007669"/>
    <property type="project" value="UniProtKB-SubCell"/>
</dbReference>
<dbReference type="GO" id="GO:0045259">
    <property type="term" value="C:proton-transporting ATP synthase complex"/>
    <property type="evidence" value="ECO:0007669"/>
    <property type="project" value="UniProtKB-KW"/>
</dbReference>
<dbReference type="GO" id="GO:0046933">
    <property type="term" value="F:proton-transporting ATP synthase activity, rotational mechanism"/>
    <property type="evidence" value="ECO:0007669"/>
    <property type="project" value="UniProtKB-UniRule"/>
</dbReference>
<dbReference type="Gene3D" id="1.10.520.20">
    <property type="entry name" value="N-terminal domain of the delta subunit of the F1F0-ATP synthase"/>
    <property type="match status" value="1"/>
</dbReference>
<dbReference type="HAMAP" id="MF_01416">
    <property type="entry name" value="ATP_synth_delta_bact"/>
    <property type="match status" value="1"/>
</dbReference>
<dbReference type="InterPro" id="IPR026015">
    <property type="entry name" value="ATP_synth_OSCP/delta_N_sf"/>
</dbReference>
<dbReference type="InterPro" id="IPR000711">
    <property type="entry name" value="ATPase_OSCP/dsu"/>
</dbReference>
<dbReference type="NCBIfam" id="TIGR01145">
    <property type="entry name" value="ATP_synt_delta"/>
    <property type="match status" value="1"/>
</dbReference>
<dbReference type="NCBIfam" id="NF004402">
    <property type="entry name" value="PRK05758.2-2"/>
    <property type="match status" value="1"/>
</dbReference>
<dbReference type="PANTHER" id="PTHR11910">
    <property type="entry name" value="ATP SYNTHASE DELTA CHAIN"/>
    <property type="match status" value="1"/>
</dbReference>
<dbReference type="Pfam" id="PF00213">
    <property type="entry name" value="OSCP"/>
    <property type="match status" value="1"/>
</dbReference>
<dbReference type="PRINTS" id="PR00125">
    <property type="entry name" value="ATPASEDELTA"/>
</dbReference>
<dbReference type="SUPFAM" id="SSF47928">
    <property type="entry name" value="N-terminal domain of the delta subunit of the F1F0-ATP synthase"/>
    <property type="match status" value="1"/>
</dbReference>
<feature type="chain" id="PRO_0000371088" description="ATP synthase subunit delta">
    <location>
        <begin position="1"/>
        <end position="180"/>
    </location>
</feature>
<evidence type="ECO:0000255" key="1">
    <source>
        <dbReference type="HAMAP-Rule" id="MF_01416"/>
    </source>
</evidence>
<comment type="function">
    <text evidence="1">F(1)F(0) ATP synthase produces ATP from ADP in the presence of a proton or sodium gradient. F-type ATPases consist of two structural domains, F(1) containing the extramembraneous catalytic core and F(0) containing the membrane proton channel, linked together by a central stalk and a peripheral stalk. During catalysis, ATP synthesis in the catalytic domain of F(1) is coupled via a rotary mechanism of the central stalk subunits to proton translocation.</text>
</comment>
<comment type="function">
    <text evidence="1">This protein is part of the stalk that links CF(0) to CF(1). It either transmits conformational changes from CF(0) to CF(1) or is implicated in proton conduction.</text>
</comment>
<comment type="subunit">
    <text evidence="1">F-type ATPases have 2 components, F(1) - the catalytic core - and F(0) - the membrane proton channel. F(1) has five subunits: alpha(3), beta(3), gamma(1), delta(1), epsilon(1). F(0) has three main subunits: a(1), b(2) and c(10-14). The alpha and beta chains form an alternating ring which encloses part of the gamma chain. F(1) is attached to F(0) by a central stalk formed by the gamma and epsilon chains, while a peripheral stalk is formed by the delta and b chains.</text>
</comment>
<comment type="subcellular location">
    <subcellularLocation>
        <location evidence="1">Cell inner membrane</location>
        <topology evidence="1">Peripheral membrane protein</topology>
    </subcellularLocation>
</comment>
<comment type="similarity">
    <text evidence="1">Belongs to the ATPase delta chain family.</text>
</comment>
<name>ATPD_CUPMC</name>
<gene>
    <name evidence="1" type="primary">atpH</name>
    <name type="ordered locus">Rmet_3497</name>
</gene>